<proteinExistence type="inferred from homology"/>
<name>MINE_SYNFM</name>
<comment type="function">
    <text evidence="1">Prevents the cell division inhibition by proteins MinC and MinD at internal division sites while permitting inhibition at polar sites. This ensures cell division at the proper site by restricting the formation of a division septum at the midpoint of the long axis of the cell.</text>
</comment>
<comment type="similarity">
    <text evidence="1">Belongs to the MinE family.</text>
</comment>
<reference key="1">
    <citation type="submission" date="2006-10" db="EMBL/GenBank/DDBJ databases">
        <title>Complete sequence of Syntrophobacter fumaroxidans MPOB.</title>
        <authorList>
            <consortium name="US DOE Joint Genome Institute"/>
            <person name="Copeland A."/>
            <person name="Lucas S."/>
            <person name="Lapidus A."/>
            <person name="Barry K."/>
            <person name="Detter J.C."/>
            <person name="Glavina del Rio T."/>
            <person name="Hammon N."/>
            <person name="Israni S."/>
            <person name="Pitluck S."/>
            <person name="Goltsman E.G."/>
            <person name="Martinez M."/>
            <person name="Schmutz J."/>
            <person name="Larimer F."/>
            <person name="Land M."/>
            <person name="Hauser L."/>
            <person name="Kyrpides N."/>
            <person name="Kim E."/>
            <person name="Boone D.R."/>
            <person name="Brockman F."/>
            <person name="Culley D."/>
            <person name="Ferry J."/>
            <person name="Gunsalus R."/>
            <person name="McInerney M.J."/>
            <person name="Morrison M."/>
            <person name="Plugge C."/>
            <person name="Rohlin L."/>
            <person name="Scholten J."/>
            <person name="Sieber J."/>
            <person name="Stams A.J.M."/>
            <person name="Worm P."/>
            <person name="Henstra A.M."/>
            <person name="Richardson P."/>
        </authorList>
    </citation>
    <scope>NUCLEOTIDE SEQUENCE [LARGE SCALE GENOMIC DNA]</scope>
    <source>
        <strain>DSM 10017 / MPOB</strain>
    </source>
</reference>
<keyword id="KW-0131">Cell cycle</keyword>
<keyword id="KW-0132">Cell division</keyword>
<keyword id="KW-1185">Reference proteome</keyword>
<evidence type="ECO:0000255" key="1">
    <source>
        <dbReference type="HAMAP-Rule" id="MF_00262"/>
    </source>
</evidence>
<protein>
    <recommendedName>
        <fullName evidence="1">Cell division topological specificity factor</fullName>
    </recommendedName>
</protein>
<gene>
    <name evidence="1" type="primary">minE</name>
    <name type="ordered locus">Sfum_1282</name>
</gene>
<dbReference type="EMBL" id="CP000478">
    <property type="protein sequence ID" value="ABK16974.1"/>
    <property type="molecule type" value="Genomic_DNA"/>
</dbReference>
<dbReference type="RefSeq" id="WP_011698145.1">
    <property type="nucleotide sequence ID" value="NC_008554.1"/>
</dbReference>
<dbReference type="FunCoup" id="A0LHS2">
    <property type="interactions" value="106"/>
</dbReference>
<dbReference type="STRING" id="335543.Sfum_1282"/>
<dbReference type="KEGG" id="sfu:Sfum_1282"/>
<dbReference type="eggNOG" id="COG0851">
    <property type="taxonomic scope" value="Bacteria"/>
</dbReference>
<dbReference type="HOGENOM" id="CLU_137929_1_1_7"/>
<dbReference type="InParanoid" id="A0LHS2"/>
<dbReference type="OrthoDB" id="9796578at2"/>
<dbReference type="Proteomes" id="UP000001784">
    <property type="component" value="Chromosome"/>
</dbReference>
<dbReference type="GO" id="GO:0051301">
    <property type="term" value="P:cell division"/>
    <property type="evidence" value="ECO:0007669"/>
    <property type="project" value="UniProtKB-KW"/>
</dbReference>
<dbReference type="GO" id="GO:0032955">
    <property type="term" value="P:regulation of division septum assembly"/>
    <property type="evidence" value="ECO:0007669"/>
    <property type="project" value="InterPro"/>
</dbReference>
<dbReference type="Gene3D" id="3.30.1070.10">
    <property type="entry name" value="Cell division topological specificity factor MinE"/>
    <property type="match status" value="1"/>
</dbReference>
<dbReference type="HAMAP" id="MF_00262">
    <property type="entry name" value="MinE"/>
    <property type="match status" value="1"/>
</dbReference>
<dbReference type="InterPro" id="IPR005527">
    <property type="entry name" value="MinE"/>
</dbReference>
<dbReference type="InterPro" id="IPR036707">
    <property type="entry name" value="MinE_sf"/>
</dbReference>
<dbReference type="NCBIfam" id="TIGR01215">
    <property type="entry name" value="minE"/>
    <property type="match status" value="1"/>
</dbReference>
<dbReference type="NCBIfam" id="NF001422">
    <property type="entry name" value="PRK00296.1"/>
    <property type="match status" value="1"/>
</dbReference>
<dbReference type="Pfam" id="PF03776">
    <property type="entry name" value="MinE"/>
    <property type="match status" value="1"/>
</dbReference>
<dbReference type="SUPFAM" id="SSF55229">
    <property type="entry name" value="Cell division protein MinE topological specificity domain"/>
    <property type="match status" value="1"/>
</dbReference>
<organism>
    <name type="scientific">Syntrophobacter fumaroxidans (strain DSM 10017 / MPOB)</name>
    <dbReference type="NCBI Taxonomy" id="335543"/>
    <lineage>
        <taxon>Bacteria</taxon>
        <taxon>Pseudomonadati</taxon>
        <taxon>Thermodesulfobacteriota</taxon>
        <taxon>Syntrophobacteria</taxon>
        <taxon>Syntrophobacterales</taxon>
        <taxon>Syntrophobacteraceae</taxon>
        <taxon>Syntrophobacter</taxon>
    </lineage>
</organism>
<accession>A0LHS2</accession>
<feature type="chain" id="PRO_0000298205" description="Cell division topological specificity factor">
    <location>
        <begin position="1"/>
        <end position="92"/>
    </location>
</feature>
<sequence>MLKAIRRFFGEKASGQVARRRMQVVLMHDRMDLTPDIMEALRNDILAVISRYMEIDSRSIRVDLEQGKEYMALVSNIQIKRVYRKAAPDIRS</sequence>